<reference key="1">
    <citation type="journal article" date="2004" name="Nature">
        <title>Genome sequence of the Brown Norway rat yields insights into mammalian evolution.</title>
        <authorList>
            <person name="Gibbs R.A."/>
            <person name="Weinstock G.M."/>
            <person name="Metzker M.L."/>
            <person name="Muzny D.M."/>
            <person name="Sodergren E.J."/>
            <person name="Scherer S."/>
            <person name="Scott G."/>
            <person name="Steffen D."/>
            <person name="Worley K.C."/>
            <person name="Burch P.E."/>
            <person name="Okwuonu G."/>
            <person name="Hines S."/>
            <person name="Lewis L."/>
            <person name="Deramo C."/>
            <person name="Delgado O."/>
            <person name="Dugan-Rocha S."/>
            <person name="Miner G."/>
            <person name="Morgan M."/>
            <person name="Hawes A."/>
            <person name="Gill R."/>
            <person name="Holt R.A."/>
            <person name="Adams M.D."/>
            <person name="Amanatides P.G."/>
            <person name="Baden-Tillson H."/>
            <person name="Barnstead M."/>
            <person name="Chin S."/>
            <person name="Evans C.A."/>
            <person name="Ferriera S."/>
            <person name="Fosler C."/>
            <person name="Glodek A."/>
            <person name="Gu Z."/>
            <person name="Jennings D."/>
            <person name="Kraft C.L."/>
            <person name="Nguyen T."/>
            <person name="Pfannkoch C.M."/>
            <person name="Sitter C."/>
            <person name="Sutton G.G."/>
            <person name="Venter J.C."/>
            <person name="Woodage T."/>
            <person name="Smith D."/>
            <person name="Lee H.-M."/>
            <person name="Gustafson E."/>
            <person name="Cahill P."/>
            <person name="Kana A."/>
            <person name="Doucette-Stamm L."/>
            <person name="Weinstock K."/>
            <person name="Fechtel K."/>
            <person name="Weiss R.B."/>
            <person name="Dunn D.M."/>
            <person name="Green E.D."/>
            <person name="Blakesley R.W."/>
            <person name="Bouffard G.G."/>
            <person name="De Jong P.J."/>
            <person name="Osoegawa K."/>
            <person name="Zhu B."/>
            <person name="Marra M."/>
            <person name="Schein J."/>
            <person name="Bosdet I."/>
            <person name="Fjell C."/>
            <person name="Jones S."/>
            <person name="Krzywinski M."/>
            <person name="Mathewson C."/>
            <person name="Siddiqui A."/>
            <person name="Wye N."/>
            <person name="McPherson J."/>
            <person name="Zhao S."/>
            <person name="Fraser C.M."/>
            <person name="Shetty J."/>
            <person name="Shatsman S."/>
            <person name="Geer K."/>
            <person name="Chen Y."/>
            <person name="Abramzon S."/>
            <person name="Nierman W.C."/>
            <person name="Havlak P.H."/>
            <person name="Chen R."/>
            <person name="Durbin K.J."/>
            <person name="Egan A."/>
            <person name="Ren Y."/>
            <person name="Song X.-Z."/>
            <person name="Li B."/>
            <person name="Liu Y."/>
            <person name="Qin X."/>
            <person name="Cawley S."/>
            <person name="Cooney A.J."/>
            <person name="D'Souza L.M."/>
            <person name="Martin K."/>
            <person name="Wu J.Q."/>
            <person name="Gonzalez-Garay M.L."/>
            <person name="Jackson A.R."/>
            <person name="Kalafus K.J."/>
            <person name="McLeod M.P."/>
            <person name="Milosavljevic A."/>
            <person name="Virk D."/>
            <person name="Volkov A."/>
            <person name="Wheeler D.A."/>
            <person name="Zhang Z."/>
            <person name="Bailey J.A."/>
            <person name="Eichler E.E."/>
            <person name="Tuzun E."/>
            <person name="Birney E."/>
            <person name="Mongin E."/>
            <person name="Ureta-Vidal A."/>
            <person name="Woodwark C."/>
            <person name="Zdobnov E."/>
            <person name="Bork P."/>
            <person name="Suyama M."/>
            <person name="Torrents D."/>
            <person name="Alexandersson M."/>
            <person name="Trask B.J."/>
            <person name="Young J.M."/>
            <person name="Huang H."/>
            <person name="Wang H."/>
            <person name="Xing H."/>
            <person name="Daniels S."/>
            <person name="Gietzen D."/>
            <person name="Schmidt J."/>
            <person name="Stevens K."/>
            <person name="Vitt U."/>
            <person name="Wingrove J."/>
            <person name="Camara F."/>
            <person name="Mar Alba M."/>
            <person name="Abril J.F."/>
            <person name="Guigo R."/>
            <person name="Smit A."/>
            <person name="Dubchak I."/>
            <person name="Rubin E.M."/>
            <person name="Couronne O."/>
            <person name="Poliakov A."/>
            <person name="Huebner N."/>
            <person name="Ganten D."/>
            <person name="Goesele C."/>
            <person name="Hummel O."/>
            <person name="Kreitler T."/>
            <person name="Lee Y.-A."/>
            <person name="Monti J."/>
            <person name="Schulz H."/>
            <person name="Zimdahl H."/>
            <person name="Himmelbauer H."/>
            <person name="Lehrach H."/>
            <person name="Jacob H.J."/>
            <person name="Bromberg S."/>
            <person name="Gullings-Handley J."/>
            <person name="Jensen-Seaman M.I."/>
            <person name="Kwitek A.E."/>
            <person name="Lazar J."/>
            <person name="Pasko D."/>
            <person name="Tonellato P.J."/>
            <person name="Twigger S."/>
            <person name="Ponting C.P."/>
            <person name="Duarte J.M."/>
            <person name="Rice S."/>
            <person name="Goodstadt L."/>
            <person name="Beatson S.A."/>
            <person name="Emes R.D."/>
            <person name="Winter E.E."/>
            <person name="Webber C."/>
            <person name="Brandt P."/>
            <person name="Nyakatura G."/>
            <person name="Adetobi M."/>
            <person name="Chiaromonte F."/>
            <person name="Elnitski L."/>
            <person name="Eswara P."/>
            <person name="Hardison R.C."/>
            <person name="Hou M."/>
            <person name="Kolbe D."/>
            <person name="Makova K."/>
            <person name="Miller W."/>
            <person name="Nekrutenko A."/>
            <person name="Riemer C."/>
            <person name="Schwartz S."/>
            <person name="Taylor J."/>
            <person name="Yang S."/>
            <person name="Zhang Y."/>
            <person name="Lindpaintner K."/>
            <person name="Andrews T.D."/>
            <person name="Caccamo M."/>
            <person name="Clamp M."/>
            <person name="Clarke L."/>
            <person name="Curwen V."/>
            <person name="Durbin R.M."/>
            <person name="Eyras E."/>
            <person name="Searle S.M."/>
            <person name="Cooper G.M."/>
            <person name="Batzoglou S."/>
            <person name="Brudno M."/>
            <person name="Sidow A."/>
            <person name="Stone E.A."/>
            <person name="Payseur B.A."/>
            <person name="Bourque G."/>
            <person name="Lopez-Otin C."/>
            <person name="Puente X.S."/>
            <person name="Chakrabarti K."/>
            <person name="Chatterji S."/>
            <person name="Dewey C."/>
            <person name="Pachter L."/>
            <person name="Bray N."/>
            <person name="Yap V.B."/>
            <person name="Caspi A."/>
            <person name="Tesler G."/>
            <person name="Pevzner P.A."/>
            <person name="Haussler D."/>
            <person name="Roskin K.M."/>
            <person name="Baertsch R."/>
            <person name="Clawson H."/>
            <person name="Furey T.S."/>
            <person name="Hinrichs A.S."/>
            <person name="Karolchik D."/>
            <person name="Kent W.J."/>
            <person name="Rosenbloom K.R."/>
            <person name="Trumbower H."/>
            <person name="Weirauch M."/>
            <person name="Cooper D.N."/>
            <person name="Stenson P.D."/>
            <person name="Ma B."/>
            <person name="Brent M."/>
            <person name="Arumugam M."/>
            <person name="Shteynberg D."/>
            <person name="Copley R.R."/>
            <person name="Taylor M.S."/>
            <person name="Riethman H."/>
            <person name="Mudunuri U."/>
            <person name="Peterson J."/>
            <person name="Guyer M."/>
            <person name="Felsenfeld A."/>
            <person name="Old S."/>
            <person name="Mockrin S."/>
            <person name="Collins F.S."/>
        </authorList>
    </citation>
    <scope>NUCLEOTIDE SEQUENCE [LARGE SCALE GENOMIC DNA]</scope>
    <source>
        <strain>Brown Norway</strain>
    </source>
</reference>
<reference key="2">
    <citation type="journal article" date="2000" name="J. Biol. Chem.">
        <title>The RIM/NIM family of neuronal C2 domain proteins. Interactions with Rab3 and a new class of Src homology 3 domain proteins.</title>
        <authorList>
            <person name="Wang Y."/>
            <person name="Sugita S."/>
            <person name="Suedhof T.C."/>
        </authorList>
    </citation>
    <scope>NUCLEOTIDE SEQUENCE [MRNA] OF 55-1847 (ISOFORMS 1 AND 2)</scope>
    <scope>TISSUE SPECIFICITY</scope>
    <scope>INTERACTION WITH RIMS1 AND RIMS2</scope>
    <source>
        <tissue>Brain</tissue>
    </source>
</reference>
<reference key="3">
    <citation type="journal article" date="1999" name="J. Biol. Chem.">
        <title>Cloning and characterization of PRAX-1. A new protein that specifically interacts with the peripheral benzodiazepine receptor.</title>
        <authorList>
            <person name="Galiegue S."/>
            <person name="Jbilo O."/>
            <person name="Combes T."/>
            <person name="Bribes E."/>
            <person name="Carayon P."/>
            <person name="Le Fur G."/>
            <person name="Casellas P."/>
        </authorList>
    </citation>
    <scope>TISSUE SPECIFICITY</scope>
</reference>
<reference key="4">
    <citation type="journal article" date="2002" name="Mol. Pharmacol.">
        <title>Expression profile and up-regulation of PRAX-1 mRNA by antidepressant treatment in the rat brain.</title>
        <authorList>
            <person name="Chardenot P."/>
            <person name="Roubert C."/>
            <person name="Galiegue S."/>
            <person name="Casellas P."/>
            <person name="Le Fur G."/>
            <person name="Soubrie P."/>
            <person name="Oury-Donat F."/>
        </authorList>
    </citation>
    <scope>TISSUE SPECIFICITY</scope>
</reference>
<organism>
    <name type="scientific">Rattus norvegicus</name>
    <name type="common">Rat</name>
    <dbReference type="NCBI Taxonomy" id="10116"/>
    <lineage>
        <taxon>Eukaryota</taxon>
        <taxon>Metazoa</taxon>
        <taxon>Chordata</taxon>
        <taxon>Craniata</taxon>
        <taxon>Vertebrata</taxon>
        <taxon>Euteleostomi</taxon>
        <taxon>Mammalia</taxon>
        <taxon>Eutheria</taxon>
        <taxon>Euarchontoglires</taxon>
        <taxon>Glires</taxon>
        <taxon>Rodentia</taxon>
        <taxon>Myomorpha</taxon>
        <taxon>Muroidea</taxon>
        <taxon>Muridae</taxon>
        <taxon>Murinae</taxon>
        <taxon>Rattus</taxon>
    </lineage>
</organism>
<feature type="chain" id="PRO_0000221382" description="Peripheral-type benzodiazepine receptor-associated protein 1">
    <location>
        <begin position="1"/>
        <end position="1847"/>
    </location>
</feature>
<feature type="domain" description="SH3 1" evidence="3">
    <location>
        <begin position="651"/>
        <end position="718"/>
    </location>
</feature>
<feature type="domain" description="Fibronectin type-III 1" evidence="4">
    <location>
        <begin position="789"/>
        <end position="880"/>
    </location>
</feature>
<feature type="domain" description="Fibronectin type-III 2" evidence="4">
    <location>
        <begin position="882"/>
        <end position="974"/>
    </location>
</feature>
<feature type="domain" description="Fibronectin type-III 3" evidence="4">
    <location>
        <begin position="979"/>
        <end position="1077"/>
    </location>
</feature>
<feature type="domain" description="SH3 2" evidence="3">
    <location>
        <begin position="1617"/>
        <end position="1685"/>
    </location>
</feature>
<feature type="domain" description="SH3 3" evidence="3">
    <location>
        <begin position="1756"/>
        <end position="1823"/>
    </location>
</feature>
<feature type="region of interest" description="Disordered" evidence="5">
    <location>
        <begin position="57"/>
        <end position="81"/>
    </location>
</feature>
<feature type="region of interest" description="Disordered" evidence="5">
    <location>
        <begin position="282"/>
        <end position="318"/>
    </location>
</feature>
<feature type="region of interest" description="Disordered" evidence="5">
    <location>
        <begin position="560"/>
        <end position="626"/>
    </location>
</feature>
<feature type="region of interest" description="Disordered" evidence="5">
    <location>
        <begin position="728"/>
        <end position="787"/>
    </location>
</feature>
<feature type="region of interest" description="Disordered" evidence="5">
    <location>
        <begin position="1107"/>
        <end position="1174"/>
    </location>
</feature>
<feature type="region of interest" description="Disordered" evidence="5">
    <location>
        <begin position="1191"/>
        <end position="1215"/>
    </location>
</feature>
<feature type="region of interest" description="Disordered" evidence="5">
    <location>
        <begin position="1240"/>
        <end position="1307"/>
    </location>
</feature>
<feature type="region of interest" description="Disordered" evidence="5">
    <location>
        <begin position="1322"/>
        <end position="1478"/>
    </location>
</feature>
<feature type="region of interest" description="Disordered" evidence="5">
    <location>
        <begin position="1514"/>
        <end position="1616"/>
    </location>
</feature>
<feature type="region of interest" description="Disordered" evidence="5">
    <location>
        <begin position="1701"/>
        <end position="1747"/>
    </location>
</feature>
<feature type="region of interest" description="Disordered" evidence="5">
    <location>
        <begin position="1818"/>
        <end position="1847"/>
    </location>
</feature>
<feature type="compositionally biased region" description="Low complexity" evidence="5">
    <location>
        <begin position="294"/>
        <end position="310"/>
    </location>
</feature>
<feature type="compositionally biased region" description="Low complexity" evidence="5">
    <location>
        <begin position="600"/>
        <end position="613"/>
    </location>
</feature>
<feature type="compositionally biased region" description="Gly residues" evidence="5">
    <location>
        <begin position="744"/>
        <end position="757"/>
    </location>
</feature>
<feature type="compositionally biased region" description="Polar residues" evidence="5">
    <location>
        <begin position="1122"/>
        <end position="1133"/>
    </location>
</feature>
<feature type="compositionally biased region" description="Basic and acidic residues" evidence="5">
    <location>
        <begin position="1203"/>
        <end position="1215"/>
    </location>
</feature>
<feature type="compositionally biased region" description="Acidic residues" evidence="5">
    <location>
        <begin position="1253"/>
        <end position="1266"/>
    </location>
</feature>
<feature type="compositionally biased region" description="Polar residues" evidence="5">
    <location>
        <begin position="1272"/>
        <end position="1284"/>
    </location>
</feature>
<feature type="compositionally biased region" description="Acidic residues" evidence="5">
    <location>
        <begin position="1296"/>
        <end position="1305"/>
    </location>
</feature>
<feature type="compositionally biased region" description="Acidic residues" evidence="5">
    <location>
        <begin position="1325"/>
        <end position="1335"/>
    </location>
</feature>
<feature type="compositionally biased region" description="Low complexity" evidence="5">
    <location>
        <begin position="1340"/>
        <end position="1352"/>
    </location>
</feature>
<feature type="compositionally biased region" description="Basic and acidic residues" evidence="5">
    <location>
        <begin position="1412"/>
        <end position="1421"/>
    </location>
</feature>
<feature type="compositionally biased region" description="Basic and acidic residues" evidence="5">
    <location>
        <begin position="1546"/>
        <end position="1578"/>
    </location>
</feature>
<feature type="splice variant" id="VSP_009211" description="In isoform 2." evidence="9">
    <location>
        <begin position="1063"/>
        <end position="1121"/>
    </location>
</feature>
<evidence type="ECO:0000250" key="1"/>
<evidence type="ECO:0000250" key="2">
    <source>
        <dbReference type="UniProtKB" id="O95153"/>
    </source>
</evidence>
<evidence type="ECO:0000255" key="3">
    <source>
        <dbReference type="PROSITE-ProRule" id="PRU00192"/>
    </source>
</evidence>
<evidence type="ECO:0000255" key="4">
    <source>
        <dbReference type="PROSITE-ProRule" id="PRU00316"/>
    </source>
</evidence>
<evidence type="ECO:0000256" key="5">
    <source>
        <dbReference type="SAM" id="MobiDB-lite"/>
    </source>
</evidence>
<evidence type="ECO:0000269" key="6">
    <source>
    </source>
</evidence>
<evidence type="ECO:0000269" key="7">
    <source>
    </source>
</evidence>
<evidence type="ECO:0000269" key="8">
    <source>
    </source>
</evidence>
<evidence type="ECO:0000303" key="9">
    <source>
    </source>
</evidence>
<evidence type="ECO:0000305" key="10"/>
<evidence type="ECO:0000312" key="11">
    <source>
        <dbReference type="RGD" id="708563"/>
    </source>
</evidence>
<name>RIMB1_RAT</name>
<sequence>MEQLTTLPRLGDPGAMEPWALPAWQHWTQGQGCKPGDASASIAATPTALQVKGLRFEESSEPAGAHSPGPIRNTDPEGTETVLPKLGQQAESPGYSCSRLEGEDAQAYKAKFNIGFGDRPNLELLRALGELQQHCTILKEENQMLRKSSFPETEEKVRRLKRKNAELAVIAKRLEERAQKLQETNMRGGEVPLCPDPDPVWSCARKALARQRARDLSETATALLAKDKQNAALQRECRELQARLSLVGKEGPQWLHMRDFDRLLRESQREVLRLQRQIALRNQREPLRPARSQGSTAPSSVGAPAPGAPGETVLEDDVESPQVVLGEPEKQLRVQQLESELCKKRKKCESLEQEARKKQRRCEELELQLRAAQNENARLVEENSRLSGKATEKEQVEWENAELKGQLLGVTQERDSALRKSQGLQSKLESLEQVLEHMRKVAQRRQQLEEEHEQARLSLQEKQEEVRRLQQAQAEAKREHEGAVQLLESTLDSMQARVRELEGQCRSQTERFSLLAQELQAFRLHPGPLDLLTSALGCNALGDHPPPHCCCSSPQPCQGSGPKDLDLPPGSPGRCTPKSSEPALATLTGVPRRTAKKAESLSNSSRSESIHNSPKSCPTPEVDTASEVEELEVDSVSLLPAAPEGHSGGGARIQVFLARYSYNPFEGPNENPEAELPLTAGEYIYIYGNMDEDGFFEGELMDGRRGLVPSNFVERVSDDDLLSTLPRELADSSHSSGPELSFLSGGGGGCSSGGQSSGGRSQPRPEEEATGDELSLSPPPEGLGEPLAVPYPRHITVLKQLAHSVVLAWELPPERVDLRGFHIFVNGELRQALGPGVPPKAVLENMDLRAGPLHVSVQALTSKGSSDPLRCCLAMGAGAGVVPSQLRIHRLTATSAEITWVPGNSNLAHAVYLNGEECPPARPSTYWATFCNLRPGTLYQARVEAQIPSQGPWEPGWERPELRAATLQFTTLPAGLPDAPLDVQAEPGPSPGIVMISWLPVTIDAAGTSNGVRVTGYAVYADGQKIMEVASPTAGSVLVEVSQLQLLQACHEVTVRTMSPHGESTDSIPAPVAPALASACQPARMSCLSPRPSPEVRTPLASVSPGLGYTSLPLRHPVPHGTQDSPASLSTEMSKGPQEEPPVPCSQEEAGSAVHRTSEEKRAMEPTLGQEGPDPVAPFLAKQAVECTSGDAGPTPCSTQEELTQKEPSTEVCHRGDLDSELKLRSEKEGMSELGVHLVNSLVDHSRNSDLSDIQEEEEEEEEEEELGSRPWSFQKQVAGNSIGENGAKPQPDPSCETDSDEEILEQILELPLQRLCSKKLFSIPEEEEEEDEEEGLGKPGPSSSSQDPSQPERALLGLDCESSQPQGPGLCPLSPELSGAREHLEDVLGVVGGNSRRRGGCSPEKLPNRKRPQDPREHCSRLLGNGGPQTSARPVPPRDRGSLPVIEGTRVGQEPGGRGRPGLSRRCPRGPAPESSLVSCLSPKCLEISIEYDSEDEQEVGSGGVSISSSCYPTDGEAWGTAAVGRPRGPVKVNSGSNTYLRLPAWEKGEPERRGRSAIGRTKEPPSRATETGESRGQDNSGRRGPQRRGARVLRTGTTELAPPRSPQEAPSHQDLPLRVFVALFDYDPISMSPNPDAGEEELPFREGQILKVFGDKDADGFYRGESGGRTGYIPCNMVAEVAVDTPTGRQQLLQRGFLPPNVLTQGSGNGPSVYPSAHTPGPPPKPRRSKKVELEDPAQLCPGPPKLIHSAALKTSRPMVAAFDYNPRENSPNMDVEAELPFRAGDVITVFGNMDDDGFYYGELNGQRGLVPSNFLEGPGPEAGGLDSGTSQAESQRTRRRRVQC</sequence>
<comment type="function">
    <text evidence="2">Required for synaptic transmission regulation. It probably controls the recruitement of voltage-gated calcium channels to the presynaptic membrane, and modulates neurotransmitter release.</text>
</comment>
<comment type="subunit">
    <text evidence="2 6">Interacts with RIMS1 and RIMS2 (PubMed:10748113). Interacts with TSPO (By similarity). Interacts with CACNA1A (By similarity).</text>
</comment>
<comment type="subcellular location">
    <subcellularLocation>
        <location evidence="2">Cytoplasm</location>
    </subcellularLocation>
    <subcellularLocation>
        <location evidence="2">Mitochondrion</location>
    </subcellularLocation>
    <text evidence="2">Preferentially expressed in the mitochondria in the presence of TSPO.</text>
</comment>
<comment type="alternative products">
    <event type="alternative splicing"/>
    <isoform>
        <id>Q9JIR0-1</id>
        <name>1</name>
        <name>Rbp1A</name>
        <name>RIM binding protein 1A</name>
        <sequence type="displayed"/>
    </isoform>
    <isoform>
        <id>Q9JIR0-2</id>
        <name>2</name>
        <name>Rbp1B</name>
        <name>RIM binding protein 1B</name>
        <sequence type="described" ref="VSP_009211"/>
    </isoform>
</comment>
<comment type="tissue specificity">
    <text evidence="6 7 8">Specifically expressed in brain. High expression level in the limbic system such as the nucleus accumbens, septum, and hippocampus, as well as on the cerebellum and pineal gland. Abundant in the CA1 region of the hippocampus.</text>
</comment>
<comment type="domain">
    <text evidence="1">The SH3 and proline-rich domain is required for the interaction with TSPO and the second SH3 domain mediates binding to a proline-rich motif in RIMS1 and RIMS2.</text>
</comment>
<comment type="similarity">
    <text evidence="10">Belongs to the RIMBP family.</text>
</comment>
<proteinExistence type="evidence at protein level"/>
<keyword id="KW-0025">Alternative splicing</keyword>
<keyword id="KW-0963">Cytoplasm</keyword>
<keyword id="KW-0496">Mitochondrion</keyword>
<keyword id="KW-1185">Reference proteome</keyword>
<keyword id="KW-0677">Repeat</keyword>
<keyword id="KW-0728">SH3 domain</keyword>
<protein>
    <recommendedName>
        <fullName>Peripheral-type benzodiazepine receptor-associated protein 1</fullName>
        <shortName>PRAX-1</shortName>
    </recommendedName>
    <alternativeName>
        <fullName>RIMS-binding protein 1</fullName>
        <shortName>RIM-BP1</shortName>
    </alternativeName>
    <alternativeName>
        <fullName evidence="11">TSPO-associated protein 1</fullName>
    </alternativeName>
</protein>
<dbReference type="EMBL" id="AABR03073157">
    <property type="status" value="NOT_ANNOTATED_CDS"/>
    <property type="molecule type" value="Genomic_DNA"/>
</dbReference>
<dbReference type="EMBL" id="AF199337">
    <property type="protein sequence ID" value="AAF81659.1"/>
    <property type="molecule type" value="mRNA"/>
</dbReference>
<dbReference type="EMBL" id="AF199338">
    <property type="protein sequence ID" value="AAF81660.1"/>
    <property type="molecule type" value="mRNA"/>
</dbReference>
<dbReference type="SMR" id="Q9JIR0"/>
<dbReference type="FunCoup" id="Q9JIR0">
    <property type="interactions" value="1216"/>
</dbReference>
<dbReference type="STRING" id="10116.ENSRNOP00000010755"/>
<dbReference type="GlyGen" id="Q9JIR0">
    <property type="glycosylation" value="3 sites"/>
</dbReference>
<dbReference type="PhosphoSitePlus" id="Q9JIR0"/>
<dbReference type="PaxDb" id="10116-ENSRNOP00000010755"/>
<dbReference type="AGR" id="RGD:708563"/>
<dbReference type="RGD" id="708563">
    <property type="gene designation" value="Tspoap1"/>
</dbReference>
<dbReference type="eggNOG" id="KOG3632">
    <property type="taxonomic scope" value="Eukaryota"/>
</dbReference>
<dbReference type="InParanoid" id="Q9JIR0"/>
<dbReference type="PhylomeDB" id="Q9JIR0"/>
<dbReference type="Reactome" id="R-RNO-181429">
    <property type="pathway name" value="Serotonin Neurotransmitter Release Cycle"/>
</dbReference>
<dbReference type="Reactome" id="R-RNO-181430">
    <property type="pathway name" value="Norepinephrine Neurotransmitter Release Cycle"/>
</dbReference>
<dbReference type="Reactome" id="R-RNO-196108">
    <property type="pathway name" value="Pregnenolone biosynthesis"/>
</dbReference>
<dbReference type="Reactome" id="R-RNO-210500">
    <property type="pathway name" value="Glutamate Neurotransmitter Release Cycle"/>
</dbReference>
<dbReference type="Reactome" id="R-RNO-212676">
    <property type="pathway name" value="Dopamine Neurotransmitter Release Cycle"/>
</dbReference>
<dbReference type="Reactome" id="R-RNO-264642">
    <property type="pathway name" value="Acetylcholine Neurotransmitter Release Cycle"/>
</dbReference>
<dbReference type="CD-CODE" id="51D569B1">
    <property type="entry name" value="Synthetic Condensate 000294"/>
</dbReference>
<dbReference type="CD-CODE" id="F9F240AC">
    <property type="entry name" value="Presynaptic clusters"/>
</dbReference>
<dbReference type="PRO" id="PR:Q9JIR0"/>
<dbReference type="Proteomes" id="UP000002494">
    <property type="component" value="Unplaced"/>
</dbReference>
<dbReference type="GO" id="GO:0044305">
    <property type="term" value="C:calyx of Held"/>
    <property type="evidence" value="ECO:0000266"/>
    <property type="project" value="RGD"/>
</dbReference>
<dbReference type="GO" id="GO:0005737">
    <property type="term" value="C:cytoplasm"/>
    <property type="evidence" value="ECO:0000266"/>
    <property type="project" value="RGD"/>
</dbReference>
<dbReference type="GO" id="GO:0098978">
    <property type="term" value="C:glutamatergic synapse"/>
    <property type="evidence" value="ECO:0000266"/>
    <property type="project" value="RGD"/>
</dbReference>
<dbReference type="GO" id="GO:0005739">
    <property type="term" value="C:mitochondrion"/>
    <property type="evidence" value="ECO:0000266"/>
    <property type="project" value="RGD"/>
</dbReference>
<dbReference type="GO" id="GO:0030156">
    <property type="term" value="F:benzodiazepine receptor binding"/>
    <property type="evidence" value="ECO:0000250"/>
    <property type="project" value="ParkinsonsUK-UCL"/>
</dbReference>
<dbReference type="GO" id="GO:0099626">
    <property type="term" value="F:voltage-gated calcium channel activity involved in regulation of presynaptic cytosolic calcium levels"/>
    <property type="evidence" value="ECO:0000266"/>
    <property type="project" value="RGD"/>
</dbReference>
<dbReference type="GO" id="GO:0046928">
    <property type="term" value="P:regulation of neurotransmitter secretion"/>
    <property type="evidence" value="ECO:0000250"/>
    <property type="project" value="UniProtKB"/>
</dbReference>
<dbReference type="CDD" id="cd00063">
    <property type="entry name" value="FN3"/>
    <property type="match status" value="1"/>
</dbReference>
<dbReference type="CDD" id="cd12014">
    <property type="entry name" value="SH3_RIM-BP_1"/>
    <property type="match status" value="1"/>
</dbReference>
<dbReference type="CDD" id="cd12012">
    <property type="entry name" value="SH3_RIM-BP_2"/>
    <property type="match status" value="1"/>
</dbReference>
<dbReference type="CDD" id="cd12013">
    <property type="entry name" value="SH3_RIM-BP_3"/>
    <property type="match status" value="1"/>
</dbReference>
<dbReference type="FunFam" id="2.30.30.40:FF:000023">
    <property type="entry name" value="RIMS-binding protein 2 isoform F"/>
    <property type="match status" value="1"/>
</dbReference>
<dbReference type="FunFam" id="2.30.30.40:FF:000006">
    <property type="entry name" value="RIMS-binding protein 2 isoform X1"/>
    <property type="match status" value="1"/>
</dbReference>
<dbReference type="FunFam" id="2.60.40.10:FF:000072">
    <property type="entry name" value="RIMS-binding protein 2 isoform X1"/>
    <property type="match status" value="1"/>
</dbReference>
<dbReference type="FunFam" id="2.30.30.40:FF:000016">
    <property type="entry name" value="RIMS-binding protein 2 isoform X2"/>
    <property type="match status" value="1"/>
</dbReference>
<dbReference type="Gene3D" id="2.60.40.10">
    <property type="entry name" value="Immunoglobulins"/>
    <property type="match status" value="1"/>
</dbReference>
<dbReference type="Gene3D" id="2.30.30.40">
    <property type="entry name" value="SH3 Domains"/>
    <property type="match status" value="3"/>
</dbReference>
<dbReference type="InterPro" id="IPR003961">
    <property type="entry name" value="FN3_dom"/>
</dbReference>
<dbReference type="InterPro" id="IPR036116">
    <property type="entry name" value="FN3_sf"/>
</dbReference>
<dbReference type="InterPro" id="IPR013783">
    <property type="entry name" value="Ig-like_fold"/>
</dbReference>
<dbReference type="InterPro" id="IPR035753">
    <property type="entry name" value="RIM-BP_SH3_2"/>
</dbReference>
<dbReference type="InterPro" id="IPR035755">
    <property type="entry name" value="RIM-BP_SH3_3"/>
</dbReference>
<dbReference type="InterPro" id="IPR040325">
    <property type="entry name" value="RIMBP1/2/3"/>
</dbReference>
<dbReference type="InterPro" id="IPR036028">
    <property type="entry name" value="SH3-like_dom_sf"/>
</dbReference>
<dbReference type="InterPro" id="IPR001452">
    <property type="entry name" value="SH3_domain"/>
</dbReference>
<dbReference type="PANTHER" id="PTHR14234:SF20">
    <property type="entry name" value="PERIPHERAL-TYPE BENZODIAZEPINE RECEPTOR-ASSOCIATED PROTEIN 1"/>
    <property type="match status" value="1"/>
</dbReference>
<dbReference type="PANTHER" id="PTHR14234">
    <property type="entry name" value="RIM BINDING PROTEIN-RELATED"/>
    <property type="match status" value="1"/>
</dbReference>
<dbReference type="Pfam" id="PF07653">
    <property type="entry name" value="SH3_2"/>
    <property type="match status" value="2"/>
</dbReference>
<dbReference type="Pfam" id="PF14604">
    <property type="entry name" value="SH3_9"/>
    <property type="match status" value="1"/>
</dbReference>
<dbReference type="SMART" id="SM00060">
    <property type="entry name" value="FN3"/>
    <property type="match status" value="3"/>
</dbReference>
<dbReference type="SMART" id="SM00326">
    <property type="entry name" value="SH3"/>
    <property type="match status" value="3"/>
</dbReference>
<dbReference type="SUPFAM" id="SSF49265">
    <property type="entry name" value="Fibronectin type III"/>
    <property type="match status" value="1"/>
</dbReference>
<dbReference type="SUPFAM" id="SSF50044">
    <property type="entry name" value="SH3-domain"/>
    <property type="match status" value="3"/>
</dbReference>
<dbReference type="PROSITE" id="PS50853">
    <property type="entry name" value="FN3"/>
    <property type="match status" value="3"/>
</dbReference>
<dbReference type="PROSITE" id="PS50002">
    <property type="entry name" value="SH3"/>
    <property type="match status" value="3"/>
</dbReference>
<gene>
    <name evidence="11" type="primary">Tspoap1</name>
    <name type="synonym">Bzrap1</name>
    <name type="synonym">Rbp1</name>
</gene>
<accession>Q9JIR0</accession>
<accession>Q9JIQ9</accession>